<sequence>MNCPYCSHPDTKVIDSRDVDDGVRRRRECVVCGQRFTTYERFQPAGLFVVKKDQRREEFNKEKLLSGLRRACEKRPLPAGAVDKIAGDIEAELYNMGKAEIPSTLLGDMVMEKLKALDNIAYVRFASVYREFTDITQLKKVVDNLVSGQDEGIHKGQLSLLPEDRVSPKTRYQRR</sequence>
<evidence type="ECO:0000255" key="1">
    <source>
        <dbReference type="HAMAP-Rule" id="MF_00440"/>
    </source>
</evidence>
<keyword id="KW-0067">ATP-binding</keyword>
<keyword id="KW-0238">DNA-binding</keyword>
<keyword id="KW-0479">Metal-binding</keyword>
<keyword id="KW-0547">Nucleotide-binding</keyword>
<keyword id="KW-0678">Repressor</keyword>
<keyword id="KW-0804">Transcription</keyword>
<keyword id="KW-0805">Transcription regulation</keyword>
<keyword id="KW-0862">Zinc</keyword>
<keyword id="KW-0863">Zinc-finger</keyword>
<protein>
    <recommendedName>
        <fullName evidence="1">Transcriptional repressor NrdR</fullName>
    </recommendedName>
</protein>
<name>NRDR_DEHM1</name>
<comment type="function">
    <text evidence="1">Negatively regulates transcription of bacterial ribonucleotide reductase nrd genes and operons by binding to NrdR-boxes.</text>
</comment>
<comment type="cofactor">
    <cofactor evidence="1">
        <name>Zn(2+)</name>
        <dbReference type="ChEBI" id="CHEBI:29105"/>
    </cofactor>
    <text evidence="1">Binds 1 zinc ion.</text>
</comment>
<comment type="similarity">
    <text evidence="1">Belongs to the NrdR family.</text>
</comment>
<reference key="1">
    <citation type="journal article" date="2005" name="Science">
        <title>Genome sequence of the PCE-dechlorinating bacterium Dehalococcoides ethenogenes.</title>
        <authorList>
            <person name="Seshadri R."/>
            <person name="Adrian L."/>
            <person name="Fouts D.E."/>
            <person name="Eisen J.A."/>
            <person name="Phillippy A.M."/>
            <person name="Methe B.A."/>
            <person name="Ward N.L."/>
            <person name="Nelson W.C."/>
            <person name="DeBoy R.T."/>
            <person name="Khouri H.M."/>
            <person name="Kolonay J.F."/>
            <person name="Dodson R.J."/>
            <person name="Daugherty S.C."/>
            <person name="Brinkac L.M."/>
            <person name="Sullivan S.A."/>
            <person name="Madupu R."/>
            <person name="Nelson K.E."/>
            <person name="Kang K.H."/>
            <person name="Impraim M."/>
            <person name="Tran K."/>
            <person name="Robinson J.M."/>
            <person name="Forberger H.A."/>
            <person name="Fraser C.M."/>
            <person name="Zinder S.H."/>
            <person name="Heidelberg J.F."/>
        </authorList>
    </citation>
    <scope>NUCLEOTIDE SEQUENCE [LARGE SCALE GENOMIC DNA]</scope>
    <source>
        <strain>ATCC BAA-2266 / KCTC 15142 / 195</strain>
    </source>
</reference>
<accession>Q3Z9K8</accession>
<feature type="chain" id="PRO_0000230865" description="Transcriptional repressor NrdR">
    <location>
        <begin position="1"/>
        <end position="175"/>
    </location>
</feature>
<feature type="domain" description="ATP-cone" evidence="1">
    <location>
        <begin position="47"/>
        <end position="137"/>
    </location>
</feature>
<feature type="zinc finger region" evidence="1">
    <location>
        <begin position="3"/>
        <end position="32"/>
    </location>
</feature>
<proteinExistence type="inferred from homology"/>
<dbReference type="EMBL" id="CP000027">
    <property type="protein sequence ID" value="AAW40401.1"/>
    <property type="molecule type" value="Genomic_DNA"/>
</dbReference>
<dbReference type="RefSeq" id="WP_010936124.1">
    <property type="nucleotide sequence ID" value="NC_002936.3"/>
</dbReference>
<dbReference type="SMR" id="Q3Z9K8"/>
<dbReference type="FunCoup" id="Q3Z9K8">
    <property type="interactions" value="165"/>
</dbReference>
<dbReference type="STRING" id="243164.DET0344"/>
<dbReference type="GeneID" id="3230365"/>
<dbReference type="KEGG" id="det:DET0344"/>
<dbReference type="eggNOG" id="COG1327">
    <property type="taxonomic scope" value="Bacteria"/>
</dbReference>
<dbReference type="HOGENOM" id="CLU_108412_0_0_0"/>
<dbReference type="InParanoid" id="Q3Z9K8"/>
<dbReference type="Proteomes" id="UP000008289">
    <property type="component" value="Chromosome"/>
</dbReference>
<dbReference type="GO" id="GO:0005524">
    <property type="term" value="F:ATP binding"/>
    <property type="evidence" value="ECO:0007669"/>
    <property type="project" value="UniProtKB-KW"/>
</dbReference>
<dbReference type="GO" id="GO:0003677">
    <property type="term" value="F:DNA binding"/>
    <property type="evidence" value="ECO:0007669"/>
    <property type="project" value="UniProtKB-KW"/>
</dbReference>
<dbReference type="GO" id="GO:0008270">
    <property type="term" value="F:zinc ion binding"/>
    <property type="evidence" value="ECO:0007669"/>
    <property type="project" value="UniProtKB-KW"/>
</dbReference>
<dbReference type="GO" id="GO:0045892">
    <property type="term" value="P:negative regulation of DNA-templated transcription"/>
    <property type="evidence" value="ECO:0007669"/>
    <property type="project" value="UniProtKB-UniRule"/>
</dbReference>
<dbReference type="HAMAP" id="MF_00440">
    <property type="entry name" value="NrdR"/>
    <property type="match status" value="1"/>
</dbReference>
<dbReference type="InterPro" id="IPR005144">
    <property type="entry name" value="ATP-cone_dom"/>
</dbReference>
<dbReference type="InterPro" id="IPR055173">
    <property type="entry name" value="NrdR-like_N"/>
</dbReference>
<dbReference type="InterPro" id="IPR003796">
    <property type="entry name" value="RNR_NrdR-like"/>
</dbReference>
<dbReference type="NCBIfam" id="TIGR00244">
    <property type="entry name" value="transcriptional regulator NrdR"/>
    <property type="match status" value="1"/>
</dbReference>
<dbReference type="PANTHER" id="PTHR30455">
    <property type="entry name" value="TRANSCRIPTIONAL REPRESSOR NRDR"/>
    <property type="match status" value="1"/>
</dbReference>
<dbReference type="PANTHER" id="PTHR30455:SF2">
    <property type="entry name" value="TRANSCRIPTIONAL REPRESSOR NRDR"/>
    <property type="match status" value="1"/>
</dbReference>
<dbReference type="Pfam" id="PF03477">
    <property type="entry name" value="ATP-cone"/>
    <property type="match status" value="1"/>
</dbReference>
<dbReference type="Pfam" id="PF22811">
    <property type="entry name" value="Zn_ribbon_NrdR"/>
    <property type="match status" value="1"/>
</dbReference>
<dbReference type="PROSITE" id="PS51161">
    <property type="entry name" value="ATP_CONE"/>
    <property type="match status" value="1"/>
</dbReference>
<organism>
    <name type="scientific">Dehalococcoides mccartyi (strain ATCC BAA-2266 / KCTC 15142 / 195)</name>
    <name type="common">Dehalococcoides ethenogenes (strain 195)</name>
    <dbReference type="NCBI Taxonomy" id="243164"/>
    <lineage>
        <taxon>Bacteria</taxon>
        <taxon>Bacillati</taxon>
        <taxon>Chloroflexota</taxon>
        <taxon>Dehalococcoidia</taxon>
        <taxon>Dehalococcoidales</taxon>
        <taxon>Dehalococcoidaceae</taxon>
        <taxon>Dehalococcoides</taxon>
    </lineage>
</organism>
<gene>
    <name evidence="1" type="primary">nrdR</name>
    <name type="ordered locus">DET0344</name>
</gene>